<feature type="chain" id="PRO_0000113582" description="Serine hydroxymethyltransferase">
    <location>
        <begin position="1"/>
        <end position="426"/>
    </location>
</feature>
<feature type="binding site" evidence="1">
    <location>
        <position position="121"/>
    </location>
    <ligand>
        <name>(6S)-5,6,7,8-tetrahydrofolate</name>
        <dbReference type="ChEBI" id="CHEBI:57453"/>
    </ligand>
</feature>
<feature type="binding site" evidence="1">
    <location>
        <begin position="125"/>
        <end position="127"/>
    </location>
    <ligand>
        <name>(6S)-5,6,7,8-tetrahydrofolate</name>
        <dbReference type="ChEBI" id="CHEBI:57453"/>
    </ligand>
</feature>
<feature type="binding site" evidence="1">
    <location>
        <begin position="354"/>
        <end position="356"/>
    </location>
    <ligand>
        <name>(6S)-5,6,7,8-tetrahydrofolate</name>
        <dbReference type="ChEBI" id="CHEBI:57453"/>
    </ligand>
</feature>
<feature type="site" description="Plays an important role in substrate specificity" evidence="1">
    <location>
        <position position="229"/>
    </location>
</feature>
<feature type="modified residue" description="N6-(pyridoxal phosphate)lysine" evidence="1">
    <location>
        <position position="230"/>
    </location>
</feature>
<protein>
    <recommendedName>
        <fullName evidence="1">Serine hydroxymethyltransferase</fullName>
        <shortName evidence="1">SHMT</shortName>
        <shortName evidence="1">Serine methylase</shortName>
        <ecNumber evidence="1">2.1.2.1</ecNumber>
    </recommendedName>
</protein>
<comment type="function">
    <text evidence="1">Catalyzes the reversible interconversion of serine and glycine with tetrahydrofolate (THF) serving as the one-carbon carrier. This reaction serves as the major source of one-carbon groups required for the biosynthesis of purines, thymidylate, methionine, and other important biomolecules. Also exhibits THF-independent aldolase activity toward beta-hydroxyamino acids, producing glycine and aldehydes, via a retro-aldol mechanism.</text>
</comment>
<comment type="catalytic activity">
    <reaction evidence="1">
        <text>(6R)-5,10-methylene-5,6,7,8-tetrahydrofolate + glycine + H2O = (6S)-5,6,7,8-tetrahydrofolate + L-serine</text>
        <dbReference type="Rhea" id="RHEA:15481"/>
        <dbReference type="ChEBI" id="CHEBI:15377"/>
        <dbReference type="ChEBI" id="CHEBI:15636"/>
        <dbReference type="ChEBI" id="CHEBI:33384"/>
        <dbReference type="ChEBI" id="CHEBI:57305"/>
        <dbReference type="ChEBI" id="CHEBI:57453"/>
        <dbReference type="EC" id="2.1.2.1"/>
    </reaction>
</comment>
<comment type="cofactor">
    <cofactor evidence="1">
        <name>pyridoxal 5'-phosphate</name>
        <dbReference type="ChEBI" id="CHEBI:597326"/>
    </cofactor>
</comment>
<comment type="pathway">
    <text evidence="1">One-carbon metabolism; tetrahydrofolate interconversion.</text>
</comment>
<comment type="pathway">
    <text evidence="1">Amino-acid biosynthesis; glycine biosynthesis; glycine from L-serine: step 1/1.</text>
</comment>
<comment type="subunit">
    <text evidence="1">Homodimer.</text>
</comment>
<comment type="subcellular location">
    <subcellularLocation>
        <location evidence="1">Cytoplasm</location>
    </subcellularLocation>
</comment>
<comment type="similarity">
    <text evidence="1">Belongs to the SHMT family.</text>
</comment>
<accession>Q7ND67</accession>
<evidence type="ECO:0000255" key="1">
    <source>
        <dbReference type="HAMAP-Rule" id="MF_00051"/>
    </source>
</evidence>
<proteinExistence type="inferred from homology"/>
<gene>
    <name evidence="1" type="primary">glyA</name>
    <name type="synonym">gylA</name>
    <name type="ordered locus">glr4369</name>
</gene>
<keyword id="KW-0028">Amino-acid biosynthesis</keyword>
<keyword id="KW-0963">Cytoplasm</keyword>
<keyword id="KW-0554">One-carbon metabolism</keyword>
<keyword id="KW-0663">Pyridoxal phosphate</keyword>
<keyword id="KW-1185">Reference proteome</keyword>
<keyword id="KW-0808">Transferase</keyword>
<organism>
    <name type="scientific">Gloeobacter violaceus (strain ATCC 29082 / PCC 7421)</name>
    <dbReference type="NCBI Taxonomy" id="251221"/>
    <lineage>
        <taxon>Bacteria</taxon>
        <taxon>Bacillati</taxon>
        <taxon>Cyanobacteriota</taxon>
        <taxon>Cyanophyceae</taxon>
        <taxon>Gloeobacterales</taxon>
        <taxon>Gloeobacteraceae</taxon>
        <taxon>Gloeobacter</taxon>
    </lineage>
</organism>
<sequence length="426" mass="45703">MPVSDDLLRATDPLVAGWIDRELNRQRSHLELIASENFTSAAVMAAQGSVLTNKYAEGLPSKRYYGGCEFVDAVEQIAIDRAKALFGAAHANVQPHSGAQANAAVFLALLERGDKILGMDLSHGGHLTHGSPVNQSGIYFEALHYGVDPASHRIDFDQVRELAHAHRPKLIICGYSAYPRVIDFECFREIADEVGAYLLADIAHIAGLVVAGVHPNPIPHCDVVTTTTHKTLRGPRGGLILTRDEALGKRFDKAVFPGTQGGPLEHVIAAKAVAFGEALQPEFKTYAADVVANARALAERLTARGLTLVSGGTDNHLMLVDLRSVDLTGKQADLLMSDVNITTNKNTIPFDPQSPFVTSGLRLGSPAMTTRGLGTTEFGEIGEIIANRLTQPTDARVVADCLERVASLCTRFALYPHLGRVVAPVG</sequence>
<reference key="1">
    <citation type="journal article" date="2003" name="DNA Res.">
        <title>Complete genome structure of Gloeobacter violaceus PCC 7421, a cyanobacterium that lacks thylakoids.</title>
        <authorList>
            <person name="Nakamura Y."/>
            <person name="Kaneko T."/>
            <person name="Sato S."/>
            <person name="Mimuro M."/>
            <person name="Miyashita H."/>
            <person name="Tsuchiya T."/>
            <person name="Sasamoto S."/>
            <person name="Watanabe A."/>
            <person name="Kawashima K."/>
            <person name="Kishida Y."/>
            <person name="Kiyokawa C."/>
            <person name="Kohara M."/>
            <person name="Matsumoto M."/>
            <person name="Matsuno A."/>
            <person name="Nakazaki N."/>
            <person name="Shimpo S."/>
            <person name="Takeuchi C."/>
            <person name="Yamada M."/>
            <person name="Tabata S."/>
        </authorList>
    </citation>
    <scope>NUCLEOTIDE SEQUENCE [LARGE SCALE GENOMIC DNA]</scope>
    <source>
        <strain>ATCC 29082 / PCC 7421</strain>
    </source>
</reference>
<name>GLYA_GLOVI</name>
<dbReference type="EC" id="2.1.2.1" evidence="1"/>
<dbReference type="EMBL" id="BA000045">
    <property type="protein sequence ID" value="BAC92310.1"/>
    <property type="molecule type" value="Genomic_DNA"/>
</dbReference>
<dbReference type="RefSeq" id="NP_927315.1">
    <property type="nucleotide sequence ID" value="NC_005125.1"/>
</dbReference>
<dbReference type="RefSeq" id="WP_011144352.1">
    <property type="nucleotide sequence ID" value="NC_005125.1"/>
</dbReference>
<dbReference type="SMR" id="Q7ND67"/>
<dbReference type="FunCoup" id="Q7ND67">
    <property type="interactions" value="427"/>
</dbReference>
<dbReference type="STRING" id="251221.gene:10761888"/>
<dbReference type="EnsemblBacteria" id="BAC92310">
    <property type="protein sequence ID" value="BAC92310"/>
    <property type="gene ID" value="BAC92310"/>
</dbReference>
<dbReference type="KEGG" id="gvi:glr4369"/>
<dbReference type="PATRIC" id="fig|251221.4.peg.4398"/>
<dbReference type="eggNOG" id="COG0112">
    <property type="taxonomic scope" value="Bacteria"/>
</dbReference>
<dbReference type="HOGENOM" id="CLU_022477_2_1_3"/>
<dbReference type="InParanoid" id="Q7ND67"/>
<dbReference type="OrthoDB" id="9803846at2"/>
<dbReference type="PhylomeDB" id="Q7ND67"/>
<dbReference type="UniPathway" id="UPA00193"/>
<dbReference type="UniPathway" id="UPA00288">
    <property type="reaction ID" value="UER01023"/>
</dbReference>
<dbReference type="Proteomes" id="UP000000557">
    <property type="component" value="Chromosome"/>
</dbReference>
<dbReference type="GO" id="GO:0005737">
    <property type="term" value="C:cytoplasm"/>
    <property type="evidence" value="ECO:0000318"/>
    <property type="project" value="GO_Central"/>
</dbReference>
<dbReference type="GO" id="GO:0005829">
    <property type="term" value="C:cytosol"/>
    <property type="evidence" value="ECO:0000318"/>
    <property type="project" value="GO_Central"/>
</dbReference>
<dbReference type="GO" id="GO:0004372">
    <property type="term" value="F:glycine hydroxymethyltransferase activity"/>
    <property type="evidence" value="ECO:0000318"/>
    <property type="project" value="GO_Central"/>
</dbReference>
<dbReference type="GO" id="GO:0030170">
    <property type="term" value="F:pyridoxal phosphate binding"/>
    <property type="evidence" value="ECO:0000318"/>
    <property type="project" value="GO_Central"/>
</dbReference>
<dbReference type="GO" id="GO:0019264">
    <property type="term" value="P:glycine biosynthetic process from serine"/>
    <property type="evidence" value="ECO:0000318"/>
    <property type="project" value="GO_Central"/>
</dbReference>
<dbReference type="GO" id="GO:0035999">
    <property type="term" value="P:tetrahydrofolate interconversion"/>
    <property type="evidence" value="ECO:0007669"/>
    <property type="project" value="UniProtKB-UniRule"/>
</dbReference>
<dbReference type="GO" id="GO:0046653">
    <property type="term" value="P:tetrahydrofolate metabolic process"/>
    <property type="evidence" value="ECO:0000318"/>
    <property type="project" value="GO_Central"/>
</dbReference>
<dbReference type="CDD" id="cd00378">
    <property type="entry name" value="SHMT"/>
    <property type="match status" value="1"/>
</dbReference>
<dbReference type="FunFam" id="3.40.640.10:FF:000001">
    <property type="entry name" value="Serine hydroxymethyltransferase"/>
    <property type="match status" value="1"/>
</dbReference>
<dbReference type="Gene3D" id="3.90.1150.10">
    <property type="entry name" value="Aspartate Aminotransferase, domain 1"/>
    <property type="match status" value="1"/>
</dbReference>
<dbReference type="Gene3D" id="3.40.640.10">
    <property type="entry name" value="Type I PLP-dependent aspartate aminotransferase-like (Major domain)"/>
    <property type="match status" value="1"/>
</dbReference>
<dbReference type="HAMAP" id="MF_00051">
    <property type="entry name" value="SHMT"/>
    <property type="match status" value="1"/>
</dbReference>
<dbReference type="InterPro" id="IPR015424">
    <property type="entry name" value="PyrdxlP-dep_Trfase"/>
</dbReference>
<dbReference type="InterPro" id="IPR015421">
    <property type="entry name" value="PyrdxlP-dep_Trfase_major"/>
</dbReference>
<dbReference type="InterPro" id="IPR015422">
    <property type="entry name" value="PyrdxlP-dep_Trfase_small"/>
</dbReference>
<dbReference type="InterPro" id="IPR001085">
    <property type="entry name" value="Ser_HO-MeTrfase"/>
</dbReference>
<dbReference type="InterPro" id="IPR049943">
    <property type="entry name" value="Ser_HO-MeTrfase-like"/>
</dbReference>
<dbReference type="InterPro" id="IPR019798">
    <property type="entry name" value="Ser_HO-MeTrfase_PLP_BS"/>
</dbReference>
<dbReference type="InterPro" id="IPR039429">
    <property type="entry name" value="SHMT-like_dom"/>
</dbReference>
<dbReference type="NCBIfam" id="NF000586">
    <property type="entry name" value="PRK00011.1"/>
    <property type="match status" value="1"/>
</dbReference>
<dbReference type="PANTHER" id="PTHR11680">
    <property type="entry name" value="SERINE HYDROXYMETHYLTRANSFERASE"/>
    <property type="match status" value="1"/>
</dbReference>
<dbReference type="PANTHER" id="PTHR11680:SF35">
    <property type="entry name" value="SERINE HYDROXYMETHYLTRANSFERASE 1"/>
    <property type="match status" value="1"/>
</dbReference>
<dbReference type="Pfam" id="PF00464">
    <property type="entry name" value="SHMT"/>
    <property type="match status" value="1"/>
</dbReference>
<dbReference type="PIRSF" id="PIRSF000412">
    <property type="entry name" value="SHMT"/>
    <property type="match status" value="1"/>
</dbReference>
<dbReference type="SUPFAM" id="SSF53383">
    <property type="entry name" value="PLP-dependent transferases"/>
    <property type="match status" value="1"/>
</dbReference>
<dbReference type="PROSITE" id="PS00096">
    <property type="entry name" value="SHMT"/>
    <property type="match status" value="1"/>
</dbReference>